<name>GGTL3_HUMAN</name>
<protein>
    <recommendedName>
        <fullName>Glutathione hydrolase light chain 3</fullName>
    </recommendedName>
    <alternativeName>
        <fullName>Gamma-glutamyltransferase light chain 3</fullName>
    </alternativeName>
</protein>
<dbReference type="EMBL" id="AC023490">
    <property type="status" value="NOT_ANNOTATED_CDS"/>
    <property type="molecule type" value="Genomic_DNA"/>
</dbReference>
<dbReference type="CCDS" id="CCDS86996.1"/>
<dbReference type="RefSeq" id="NP_001342408.1">
    <property type="nucleotide sequence ID" value="NM_001355479.1"/>
</dbReference>
<dbReference type="SMR" id="B5MD39"/>
<dbReference type="FunCoup" id="B5MD39">
    <property type="interactions" value="83"/>
</dbReference>
<dbReference type="IntAct" id="B5MD39">
    <property type="interactions" value="1"/>
</dbReference>
<dbReference type="STRING" id="9606.ENSP00000477856"/>
<dbReference type="BioMuta" id="GGTLC3"/>
<dbReference type="jPOST" id="B5MD39"/>
<dbReference type="MassIVE" id="B5MD39"/>
<dbReference type="PaxDb" id="9606-ENSP00000477856"/>
<dbReference type="PeptideAtlas" id="B5MD39"/>
<dbReference type="Antibodypedia" id="75521">
    <property type="antibodies" value="3 antibodies from 3 providers"/>
</dbReference>
<dbReference type="Ensembl" id="ENST00000619998.1">
    <property type="protein sequence ID" value="ENSP00000477856.1"/>
    <property type="gene ID" value="ENSG00000274252.1"/>
</dbReference>
<dbReference type="GeneID" id="728226"/>
<dbReference type="MANE-Select" id="ENST00000619998.1">
    <property type="protein sequence ID" value="ENSP00000477856.1"/>
    <property type="RefSeq nucleotide sequence ID" value="NM_001355479.1"/>
    <property type="RefSeq protein sequence ID" value="NP_001342408.1"/>
</dbReference>
<dbReference type="UCSC" id="uc062biv.1">
    <property type="organism name" value="human"/>
</dbReference>
<dbReference type="AGR" id="HGNC:33426"/>
<dbReference type="GeneCards" id="GGTLC3"/>
<dbReference type="HGNC" id="HGNC:33426">
    <property type="gene designation" value="GGTLC3"/>
</dbReference>
<dbReference type="HPA" id="ENSG00000274252">
    <property type="expression patterns" value="Group enriched (kidney, thyroid gland)"/>
</dbReference>
<dbReference type="MIM" id="612340">
    <property type="type" value="gene"/>
</dbReference>
<dbReference type="neXtProt" id="NX_B5MD39"/>
<dbReference type="VEuPathDB" id="HostDB:ENSG00000274252"/>
<dbReference type="eggNOG" id="KOG2410">
    <property type="taxonomic scope" value="Eukaryota"/>
</dbReference>
<dbReference type="GeneTree" id="ENSGT00940000154601"/>
<dbReference type="HOGENOM" id="CLU_014813_1_3_1"/>
<dbReference type="InParanoid" id="B5MD39"/>
<dbReference type="OMA" id="PRIPYVE"/>
<dbReference type="PAN-GO" id="B5MD39">
    <property type="GO annotations" value="0 GO annotations based on evolutionary models"/>
</dbReference>
<dbReference type="PhylomeDB" id="B5MD39"/>
<dbReference type="Pharos" id="B5MD39">
    <property type="development level" value="Tdark"/>
</dbReference>
<dbReference type="Proteomes" id="UP000005640">
    <property type="component" value="Chromosome 22"/>
</dbReference>
<dbReference type="RNAct" id="B5MD39">
    <property type="molecule type" value="protein"/>
</dbReference>
<dbReference type="Bgee" id="ENSG00000274252">
    <property type="expression patterns" value="Expressed in male germ line stem cell (sensu Vertebrata) in testis and 72 other cell types or tissues"/>
</dbReference>
<dbReference type="GO" id="GO:0070062">
    <property type="term" value="C:extracellular exosome"/>
    <property type="evidence" value="ECO:0007005"/>
    <property type="project" value="UniProtKB"/>
</dbReference>
<dbReference type="GO" id="GO:0036374">
    <property type="term" value="F:glutathione hydrolase activity"/>
    <property type="evidence" value="ECO:0007669"/>
    <property type="project" value="InterPro"/>
</dbReference>
<dbReference type="GO" id="GO:0006751">
    <property type="term" value="P:glutathione catabolic process"/>
    <property type="evidence" value="ECO:0007669"/>
    <property type="project" value="InterPro"/>
</dbReference>
<dbReference type="GO" id="GO:1901750">
    <property type="term" value="P:leukotriene D4 biosynthetic process"/>
    <property type="evidence" value="ECO:0000250"/>
    <property type="project" value="UniProtKB"/>
</dbReference>
<dbReference type="FunFam" id="3.60.20.40:FF:000007">
    <property type="entry name" value="Glutathione hydrolase 1 proenzyme"/>
    <property type="match status" value="1"/>
</dbReference>
<dbReference type="Gene3D" id="1.10.246.130">
    <property type="match status" value="1"/>
</dbReference>
<dbReference type="Gene3D" id="3.60.20.40">
    <property type="match status" value="1"/>
</dbReference>
<dbReference type="InterPro" id="IPR055262">
    <property type="entry name" value="GGT_CS"/>
</dbReference>
<dbReference type="InterPro" id="IPR043138">
    <property type="entry name" value="GGT_lsub_C"/>
</dbReference>
<dbReference type="InterPro" id="IPR000101">
    <property type="entry name" value="GGT_peptidase"/>
</dbReference>
<dbReference type="InterPro" id="IPR043137">
    <property type="entry name" value="GGT_ssub"/>
</dbReference>
<dbReference type="InterPro" id="IPR029055">
    <property type="entry name" value="Ntn_hydrolases_N"/>
</dbReference>
<dbReference type="PANTHER" id="PTHR45027:SF5">
    <property type="entry name" value="GLUTATHIONE HYDROLASE LIGHT CHAIN 2-RELATED"/>
    <property type="match status" value="1"/>
</dbReference>
<dbReference type="PANTHER" id="PTHR45027">
    <property type="entry name" value="PUTATIVE GLUTATHIONE HYDROLASE LIGHT CHAIN"/>
    <property type="match status" value="1"/>
</dbReference>
<dbReference type="Pfam" id="PF01019">
    <property type="entry name" value="G_glu_transpept"/>
    <property type="match status" value="1"/>
</dbReference>
<dbReference type="PRINTS" id="PR01210">
    <property type="entry name" value="GGTRANSPTASE"/>
</dbReference>
<dbReference type="SUPFAM" id="SSF56235">
    <property type="entry name" value="N-terminal nucleophile aminohydrolases (Ntn hydrolases)"/>
    <property type="match status" value="1"/>
</dbReference>
<dbReference type="PROSITE" id="PS00462">
    <property type="entry name" value="G_GLU_TRANSPEPTIDASE"/>
    <property type="match status" value="1"/>
</dbReference>
<comment type="function">
    <text evidence="1">Likely to be catalytically inactive.</text>
</comment>
<comment type="miscellaneous">
    <text>Corresponds to the light chain of other gamma-glutamyltransferase family members.</text>
</comment>
<comment type="similarity">
    <text evidence="2">Belongs to the gamma-glutamyltransferase family.</text>
</comment>
<feature type="chain" id="PRO_0000355316" description="Glutathione hydrolase light chain 3">
    <location>
        <begin position="1"/>
        <end position="225"/>
    </location>
</feature>
<feature type="active site" description="Nucleophile" evidence="1">
    <location>
        <position position="37"/>
    </location>
</feature>
<feature type="binding site" evidence="1">
    <location>
        <position position="55"/>
    </location>
    <ligand>
        <name>L-glutamate</name>
        <dbReference type="ChEBI" id="CHEBI:29985"/>
    </ligand>
</feature>
<feature type="binding site" evidence="1">
    <location>
        <position position="76"/>
    </location>
    <ligand>
        <name>L-glutamate</name>
        <dbReference type="ChEBI" id="CHEBI:29985"/>
    </ligand>
</feature>
<feature type="binding site" evidence="1">
    <location>
        <begin position="107"/>
        <end position="108"/>
    </location>
    <ligand>
        <name>L-glutamate</name>
        <dbReference type="ChEBI" id="CHEBI:29985"/>
    </ligand>
</feature>
<feature type="binding site" evidence="1">
    <location>
        <begin position="129"/>
        <end position="130"/>
    </location>
    <ligand>
        <name>L-glutamate</name>
        <dbReference type="ChEBI" id="CHEBI:29985"/>
    </ligand>
</feature>
<organism>
    <name type="scientific">Homo sapiens</name>
    <name type="common">Human</name>
    <dbReference type="NCBI Taxonomy" id="9606"/>
    <lineage>
        <taxon>Eukaryota</taxon>
        <taxon>Metazoa</taxon>
        <taxon>Chordata</taxon>
        <taxon>Craniata</taxon>
        <taxon>Vertebrata</taxon>
        <taxon>Euteleostomi</taxon>
        <taxon>Mammalia</taxon>
        <taxon>Eutheria</taxon>
        <taxon>Euarchontoglires</taxon>
        <taxon>Primates</taxon>
        <taxon>Haplorrhini</taxon>
        <taxon>Catarrhini</taxon>
        <taxon>Hominidae</taxon>
        <taxon>Homo</taxon>
    </lineage>
</organism>
<evidence type="ECO:0000250" key="1">
    <source>
        <dbReference type="UniProtKB" id="P19440"/>
    </source>
</evidence>
<evidence type="ECO:0000305" key="2"/>
<accession>B5MD39</accession>
<accession>A6NEA2</accession>
<reference key="1">
    <citation type="journal article" date="1999" name="Nature">
        <title>The DNA sequence of human chromosome 22.</title>
        <authorList>
            <person name="Dunham I."/>
            <person name="Hunt A.R."/>
            <person name="Collins J.E."/>
            <person name="Bruskiewich R."/>
            <person name="Beare D.M."/>
            <person name="Clamp M."/>
            <person name="Smink L.J."/>
            <person name="Ainscough R."/>
            <person name="Almeida J.P."/>
            <person name="Babbage A.K."/>
            <person name="Bagguley C."/>
            <person name="Bailey J."/>
            <person name="Barlow K.F."/>
            <person name="Bates K.N."/>
            <person name="Beasley O.P."/>
            <person name="Bird C.P."/>
            <person name="Blakey S.E."/>
            <person name="Bridgeman A.M."/>
            <person name="Buck D."/>
            <person name="Burgess J."/>
            <person name="Burrill W.D."/>
            <person name="Burton J."/>
            <person name="Carder C."/>
            <person name="Carter N.P."/>
            <person name="Chen Y."/>
            <person name="Clark G."/>
            <person name="Clegg S.M."/>
            <person name="Cobley V.E."/>
            <person name="Cole C.G."/>
            <person name="Collier R.E."/>
            <person name="Connor R."/>
            <person name="Conroy D."/>
            <person name="Corby N.R."/>
            <person name="Coville G.J."/>
            <person name="Cox A.V."/>
            <person name="Davis J."/>
            <person name="Dawson E."/>
            <person name="Dhami P.D."/>
            <person name="Dockree C."/>
            <person name="Dodsworth S.J."/>
            <person name="Durbin R.M."/>
            <person name="Ellington A.G."/>
            <person name="Evans K.L."/>
            <person name="Fey J.M."/>
            <person name="Fleming K."/>
            <person name="French L."/>
            <person name="Garner A.A."/>
            <person name="Gilbert J.G.R."/>
            <person name="Goward M.E."/>
            <person name="Grafham D.V."/>
            <person name="Griffiths M.N.D."/>
            <person name="Hall C."/>
            <person name="Hall R.E."/>
            <person name="Hall-Tamlyn G."/>
            <person name="Heathcott R.W."/>
            <person name="Ho S."/>
            <person name="Holmes S."/>
            <person name="Hunt S.E."/>
            <person name="Jones M.C."/>
            <person name="Kershaw J."/>
            <person name="Kimberley A.M."/>
            <person name="King A."/>
            <person name="Laird G.K."/>
            <person name="Langford C.F."/>
            <person name="Leversha M.A."/>
            <person name="Lloyd C."/>
            <person name="Lloyd D.M."/>
            <person name="Martyn I.D."/>
            <person name="Mashreghi-Mohammadi M."/>
            <person name="Matthews L.H."/>
            <person name="Mccann O.T."/>
            <person name="Mcclay J."/>
            <person name="Mclaren S."/>
            <person name="McMurray A.A."/>
            <person name="Milne S.A."/>
            <person name="Mortimore B.J."/>
            <person name="Odell C.N."/>
            <person name="Pavitt R."/>
            <person name="Pearce A.V."/>
            <person name="Pearson D."/>
            <person name="Phillimore B.J.C.T."/>
            <person name="Phillips S.H."/>
            <person name="Plumb R.W."/>
            <person name="Ramsay H."/>
            <person name="Ramsey Y."/>
            <person name="Rogers L."/>
            <person name="Ross M.T."/>
            <person name="Scott C.E."/>
            <person name="Sehra H.K."/>
            <person name="Skuce C.D."/>
            <person name="Smalley S."/>
            <person name="Smith M.L."/>
            <person name="Soderlund C."/>
            <person name="Spragon L."/>
            <person name="Steward C.A."/>
            <person name="Sulston J.E."/>
            <person name="Swann R.M."/>
            <person name="Vaudin M."/>
            <person name="Wall M."/>
            <person name="Wallis J.M."/>
            <person name="Whiteley M.N."/>
            <person name="Willey D.L."/>
            <person name="Williams L."/>
            <person name="Williams S.A."/>
            <person name="Williamson H."/>
            <person name="Wilmer T.E."/>
            <person name="Wilming L."/>
            <person name="Wright C.L."/>
            <person name="Hubbard T."/>
            <person name="Bentley D.R."/>
            <person name="Beck S."/>
            <person name="Rogers J."/>
            <person name="Shimizu N."/>
            <person name="Minoshima S."/>
            <person name="Kawasaki K."/>
            <person name="Sasaki T."/>
            <person name="Asakawa S."/>
            <person name="Kudoh J."/>
            <person name="Shintani A."/>
            <person name="Shibuya K."/>
            <person name="Yoshizaki Y."/>
            <person name="Aoki N."/>
            <person name="Mitsuyama S."/>
            <person name="Roe B.A."/>
            <person name="Chen F."/>
            <person name="Chu L."/>
            <person name="Crabtree J."/>
            <person name="Deschamps S."/>
            <person name="Do A."/>
            <person name="Do T."/>
            <person name="Dorman A."/>
            <person name="Fang F."/>
            <person name="Fu Y."/>
            <person name="Hu P."/>
            <person name="Hua A."/>
            <person name="Kenton S."/>
            <person name="Lai H."/>
            <person name="Lao H.I."/>
            <person name="Lewis J."/>
            <person name="Lewis S."/>
            <person name="Lin S.-P."/>
            <person name="Loh P."/>
            <person name="Malaj E."/>
            <person name="Nguyen T."/>
            <person name="Pan H."/>
            <person name="Phan S."/>
            <person name="Qi S."/>
            <person name="Qian Y."/>
            <person name="Ray L."/>
            <person name="Ren Q."/>
            <person name="Shaull S."/>
            <person name="Sloan D."/>
            <person name="Song L."/>
            <person name="Wang Q."/>
            <person name="Wang Y."/>
            <person name="Wang Z."/>
            <person name="White J."/>
            <person name="Willingham D."/>
            <person name="Wu H."/>
            <person name="Yao Z."/>
            <person name="Zhan M."/>
            <person name="Zhang G."/>
            <person name="Chissoe S."/>
            <person name="Murray J."/>
            <person name="Miller N."/>
            <person name="Minx P."/>
            <person name="Fulton R."/>
            <person name="Johnson D."/>
            <person name="Bemis G."/>
            <person name="Bentley D."/>
            <person name="Bradshaw H."/>
            <person name="Bourne S."/>
            <person name="Cordes M."/>
            <person name="Du Z."/>
            <person name="Fulton L."/>
            <person name="Goela D."/>
            <person name="Graves T."/>
            <person name="Hawkins J."/>
            <person name="Hinds K."/>
            <person name="Kemp K."/>
            <person name="Latreille P."/>
            <person name="Layman D."/>
            <person name="Ozersky P."/>
            <person name="Rohlfing T."/>
            <person name="Scheet P."/>
            <person name="Walker C."/>
            <person name="Wamsley A."/>
            <person name="Wohldmann P."/>
            <person name="Pepin K."/>
            <person name="Nelson J."/>
            <person name="Korf I."/>
            <person name="Bedell J.A."/>
            <person name="Hillier L.W."/>
            <person name="Mardis E."/>
            <person name="Waterston R."/>
            <person name="Wilson R."/>
            <person name="Emanuel B.S."/>
            <person name="Shaikh T."/>
            <person name="Kurahashi H."/>
            <person name="Saitta S."/>
            <person name="Budarf M.L."/>
            <person name="McDermid H.E."/>
            <person name="Johnson A."/>
            <person name="Wong A.C.C."/>
            <person name="Morrow B.E."/>
            <person name="Edelmann L."/>
            <person name="Kim U.J."/>
            <person name="Shizuya H."/>
            <person name="Simon M.I."/>
            <person name="Dumanski J.P."/>
            <person name="Peyrard M."/>
            <person name="Kedra D."/>
            <person name="Seroussi E."/>
            <person name="Fransson I."/>
            <person name="Tapia I."/>
            <person name="Bruder C.E."/>
            <person name="O'Brien K.P."/>
            <person name="Wilkinson P."/>
            <person name="Bodenteich A."/>
            <person name="Hartman K."/>
            <person name="Hu X."/>
            <person name="Khan A.S."/>
            <person name="Lane L."/>
            <person name="Tilahun Y."/>
            <person name="Wright H."/>
        </authorList>
    </citation>
    <scope>NUCLEOTIDE SEQUENCE [LARGE SCALE GENOMIC DNA]</scope>
</reference>
<reference key="2">
    <citation type="journal article" date="2008" name="Hum. Genet.">
        <title>The human gamma-glutamyltransferase gene family.</title>
        <authorList>
            <person name="Heisterkamp N."/>
            <person name="Groffen J."/>
            <person name="Warburton D."/>
            <person name="Sneddon T.P."/>
        </authorList>
    </citation>
    <scope>NOMENCLATURE</scope>
</reference>
<sequence>MTSEFFAAQLRSQISDHTTHPISYYKPEFYTPDDGGTAHLSVVAEDGSAVSATSTINLYFGSKVCSPVSGILFNNEWTTSALPAFTNEFGAPPSPANFIQPGKQPLLSMCPTIMVGQDGQVRMVVGAAGGTQITTDTALAIIYNLWFGYDVKRAVEEPRLHNKLLPNVTTVERNIDQAVTAALETRHHHTQIASTFIAVVQAIVRTAGGWAAASDSRKGGEPAGY</sequence>
<proteinExistence type="inferred from homology"/>
<gene>
    <name type="primary">GGTLC3</name>
</gene>
<keyword id="KW-1185">Reference proteome</keyword>